<protein>
    <recommendedName>
        <fullName>Transcription elongation factor SPT4-B</fullName>
    </recommendedName>
    <alternativeName>
        <fullName>DRB sensitivity-inducing factor small subunit 2</fullName>
        <shortName>DSIF small subunit 2</shortName>
    </alternativeName>
    <alternativeName>
        <fullName>Transcription elongation factor SPT4 2</fullName>
    </alternativeName>
</protein>
<organism>
    <name type="scientific">Mus musculus</name>
    <name type="common">Mouse</name>
    <dbReference type="NCBI Taxonomy" id="10090"/>
    <lineage>
        <taxon>Eukaryota</taxon>
        <taxon>Metazoa</taxon>
        <taxon>Chordata</taxon>
        <taxon>Craniata</taxon>
        <taxon>Vertebrata</taxon>
        <taxon>Euteleostomi</taxon>
        <taxon>Mammalia</taxon>
        <taxon>Eutheria</taxon>
        <taxon>Euarchontoglires</taxon>
        <taxon>Glires</taxon>
        <taxon>Rodentia</taxon>
        <taxon>Myomorpha</taxon>
        <taxon>Muroidea</taxon>
        <taxon>Muridae</taxon>
        <taxon>Murinae</taxon>
        <taxon>Mus</taxon>
        <taxon>Mus</taxon>
    </lineage>
</organism>
<accession>Q9Z199</accession>
<sequence length="117" mass="13194">MALETVPKDLRHLRACLLCSLVKTIDQFEYDGCDNCDAYLQMKGNREMVYDCTSSSFDGINAMMSPEDSWVSKWQRVSNFKPGVYAVSVTGRLPQGIVRELKSRGVAYKSRDTAIKT</sequence>
<feature type="chain" id="PRO_0000210328" description="Transcription elongation factor SPT4-B">
    <location>
        <begin position="1"/>
        <end position="117"/>
    </location>
</feature>
<feature type="zinc finger region" description="C4-type" evidence="3">
    <location>
        <begin position="16"/>
        <end position="36"/>
    </location>
</feature>
<feature type="region of interest" description="Interaction with SUPT5H" evidence="1">
    <location>
        <begin position="1"/>
        <end position="40"/>
    </location>
</feature>
<evidence type="ECO:0000250" key="1"/>
<evidence type="ECO:0000250" key="2">
    <source>
        <dbReference type="UniProtKB" id="P63272"/>
    </source>
</evidence>
<evidence type="ECO:0000255" key="3"/>
<evidence type="ECO:0000269" key="4">
    <source>
    </source>
</evidence>
<evidence type="ECO:0000305" key="5"/>
<gene>
    <name type="primary">Supt4h1b</name>
    <name type="synonym">Gm3258</name>
    <name type="synonym">Supt4b</name>
    <name type="synonym">Supt4h2</name>
</gene>
<reference key="1">
    <citation type="journal article" date="1998" name="Nucleic Acids Res.">
        <title>Comparison of murine Supt4h and a nearly identical expressed, processed gene: evidence of sequence conservation through gene conversion extending into the untranslated regions.</title>
        <authorList>
            <person name="Chiang P.-W."/>
            <person name="Zhang R."/>
            <person name="Stubbs L."/>
            <person name="Zhang L."/>
            <person name="Zhu L."/>
            <person name="Kurnit D.M."/>
        </authorList>
    </citation>
    <scope>NUCLEOTIDE SEQUENCE [GENOMIC DNA]</scope>
    <scope>TISSUE SPECIFICITY</scope>
</reference>
<proteinExistence type="evidence at transcript level"/>
<dbReference type="EMBL" id="U96810">
    <property type="protein sequence ID" value="AAC71660.1"/>
    <property type="molecule type" value="Genomic_DNA"/>
</dbReference>
<dbReference type="RefSeq" id="NP_035639.1">
    <property type="nucleotide sequence ID" value="NM_011509.2"/>
</dbReference>
<dbReference type="SMR" id="Q9Z199"/>
<dbReference type="FunCoup" id="Q9Z199">
    <property type="interactions" value="889"/>
</dbReference>
<dbReference type="IntAct" id="Q9Z199">
    <property type="interactions" value="1"/>
</dbReference>
<dbReference type="jPOST" id="Q9Z199"/>
<dbReference type="ProteomicsDB" id="254548"/>
<dbReference type="Pumba" id="Q9Z199"/>
<dbReference type="DNASU" id="100041294"/>
<dbReference type="GeneID" id="100041294"/>
<dbReference type="KEGG" id="mmu:100041294"/>
<dbReference type="UCSC" id="uc011xck.1">
    <property type="organism name" value="mouse"/>
</dbReference>
<dbReference type="AGR" id="MGI:1335090"/>
<dbReference type="CTD" id="100041294"/>
<dbReference type="MGI" id="MGI:1335090">
    <property type="gene designation" value="Supt4b"/>
</dbReference>
<dbReference type="InParanoid" id="Q9Z199"/>
<dbReference type="OrthoDB" id="3437at9989"/>
<dbReference type="BioGRID-ORCS" id="100041294">
    <property type="hits" value="4 hits in 10 CRISPR screens"/>
</dbReference>
<dbReference type="PRO" id="PR:Q9Z199"/>
<dbReference type="Proteomes" id="UP000000589">
    <property type="component" value="Unplaced"/>
</dbReference>
<dbReference type="RNAct" id="Q9Z199">
    <property type="molecule type" value="protein"/>
</dbReference>
<dbReference type="GO" id="GO:0032044">
    <property type="term" value="C:DSIF complex"/>
    <property type="evidence" value="ECO:0000250"/>
    <property type="project" value="UniProtKB"/>
</dbReference>
<dbReference type="GO" id="GO:0008270">
    <property type="term" value="F:zinc ion binding"/>
    <property type="evidence" value="ECO:0007669"/>
    <property type="project" value="UniProtKB-KW"/>
</dbReference>
<dbReference type="GO" id="GO:0006355">
    <property type="term" value="P:regulation of DNA-templated transcription"/>
    <property type="evidence" value="ECO:0007669"/>
    <property type="project" value="InterPro"/>
</dbReference>
<dbReference type="GO" id="GO:0140673">
    <property type="term" value="P:transcription elongation-coupled chromatin remodeling"/>
    <property type="evidence" value="ECO:0007669"/>
    <property type="project" value="InterPro"/>
</dbReference>
<dbReference type="CDD" id="cd07973">
    <property type="entry name" value="Spt4"/>
    <property type="match status" value="1"/>
</dbReference>
<dbReference type="FunFam" id="3.30.40.210:FF:000006">
    <property type="entry name" value="Transcription elongation factor SPT4"/>
    <property type="match status" value="1"/>
</dbReference>
<dbReference type="Gene3D" id="3.30.40.210">
    <property type="match status" value="1"/>
</dbReference>
<dbReference type="InterPro" id="IPR029040">
    <property type="entry name" value="RPABC4/Spt4"/>
</dbReference>
<dbReference type="InterPro" id="IPR009287">
    <property type="entry name" value="Spt4"/>
</dbReference>
<dbReference type="InterPro" id="IPR022800">
    <property type="entry name" value="Spt4/RpoE2_Znf"/>
</dbReference>
<dbReference type="InterPro" id="IPR038510">
    <property type="entry name" value="Spt4_sf"/>
</dbReference>
<dbReference type="PANTHER" id="PTHR12882">
    <property type="entry name" value="SUPPRESSOR OF TY 4"/>
    <property type="match status" value="1"/>
</dbReference>
<dbReference type="PANTHER" id="PTHR12882:SF1">
    <property type="entry name" value="TRANSCRIPTION ELONGATION FACTOR SPT4"/>
    <property type="match status" value="1"/>
</dbReference>
<dbReference type="Pfam" id="PF06093">
    <property type="entry name" value="Spt4"/>
    <property type="match status" value="1"/>
</dbReference>
<dbReference type="PIRSF" id="PIRSF025023">
    <property type="entry name" value="Spt4"/>
    <property type="match status" value="1"/>
</dbReference>
<dbReference type="SMART" id="SM01389">
    <property type="entry name" value="Spt4"/>
    <property type="match status" value="1"/>
</dbReference>
<dbReference type="SUPFAM" id="SSF63393">
    <property type="entry name" value="RNA polymerase subunits"/>
    <property type="match status" value="1"/>
</dbReference>
<comment type="function">
    <text evidence="1">Component of the DRB sensitivity-inducing factor complex (DSIF complex), which regulates mRNA processing and transcription elongation by RNA polymerase II. DSIF positively regulates mRNA capping by stimulating the mRNA guanylyltransferase activity of RNGTT/CAP1A. DSIF also acts cooperatively with the negative elongation factor complex (NELF complex) to enhance transcriptional pausing at sites proximal to the promoter. Transcriptional pausing may facilitate the assembly of an elongation competent RNA polymerase II complex. DSIF and NELF promote pausing by inhibition of the transcription elongation factor TFIIS/S-II. TFIIS/S-II binds to RNA polymerase II at transcription pause sites and stimulates the weak intrinsic nuclease activity of the enzyme. Cleavage of blocked transcripts by RNA polymerase II promotes the resumption of transcription from the new 3' terminus and may allow repeated attempts at transcription through natural pause sites (By similarity).</text>
</comment>
<comment type="subunit">
    <text evidence="1">Interacts with SUPT5H to form DSIF. DSIF interacts with the positive transcription elongation factor b complex (P-TEFb complex), which is composed of CDK9 and cyclin-T (CCNT1 or CCNT2). DSIF interacts with RNA polymerase II, and this interaction is reduced by phosphorylation of the C-terminal domain (CTD) of POLR2A by P-TEFb. DSIF also interacts with the NELF complex, which is composed of WHSC2/NELFA, COBRA1/NELFB, TH1L/NELFD and RDBP/NELFE, and this interaction occurs following prior binding of DSIF to RNA polymerase II. DSIF also interacts with HRMT1L2/PRMT1, HTATSF1/TATSF1, RNGTT/CAP1A, SKB1/PRMT5, SUPT6H, and can interact with PIN1 (By similarity).</text>
</comment>
<comment type="subcellular location">
    <subcellularLocation>
        <location evidence="1">Nucleus</location>
    </subcellularLocation>
</comment>
<comment type="tissue specificity">
    <text evidence="4">Expressed in brain, heart and liver.</text>
</comment>
<comment type="PTM">
    <text evidence="2">Ubiquitinated by Ubr5 when not assembled in the DSIF complex, leading to its degradation: Ubr5 recognizes and binds a degron that is not accessible when Supt4h1b is part of the DSIF complex.</text>
</comment>
<comment type="similarity">
    <text evidence="5">Belongs to the SPT4 family.</text>
</comment>
<keyword id="KW-0010">Activator</keyword>
<keyword id="KW-0479">Metal-binding</keyword>
<keyword id="KW-0539">Nucleus</keyword>
<keyword id="KW-1185">Reference proteome</keyword>
<keyword id="KW-0678">Repressor</keyword>
<keyword id="KW-0804">Transcription</keyword>
<keyword id="KW-0805">Transcription regulation</keyword>
<keyword id="KW-0832">Ubl conjugation</keyword>
<keyword id="KW-0862">Zinc</keyword>
<keyword id="KW-0863">Zinc-finger</keyword>
<name>SPT4B_MOUSE</name>